<evidence type="ECO:0000250" key="1"/>
<evidence type="ECO:0000250" key="2">
    <source>
        <dbReference type="UniProtKB" id="Q5HYI7"/>
    </source>
</evidence>
<evidence type="ECO:0000256" key="3">
    <source>
        <dbReference type="SAM" id="MobiDB-lite"/>
    </source>
</evidence>
<evidence type="ECO:0000305" key="4"/>
<protein>
    <recommendedName>
        <fullName>Metaxin-3</fullName>
        <shortName>zMTX3</shortName>
    </recommendedName>
</protein>
<keyword id="KW-0472">Membrane</keyword>
<keyword id="KW-0496">Mitochondrion</keyword>
<keyword id="KW-1000">Mitochondrion outer membrane</keyword>
<keyword id="KW-0653">Protein transport</keyword>
<keyword id="KW-1185">Reference proteome</keyword>
<keyword id="KW-0813">Transport</keyword>
<dbReference type="EMBL" id="AY194226">
    <property type="protein sequence ID" value="AAO23008.1"/>
    <property type="molecule type" value="mRNA"/>
</dbReference>
<dbReference type="EMBL" id="BC094962">
    <property type="protein sequence ID" value="AAH94962.1"/>
    <property type="molecule type" value="mRNA"/>
</dbReference>
<dbReference type="RefSeq" id="NP_991184.1">
    <property type="nucleotide sequence ID" value="NM_205621.1"/>
</dbReference>
<dbReference type="SMR" id="Q4VBW0"/>
<dbReference type="FunCoup" id="Q4VBW0">
    <property type="interactions" value="2095"/>
</dbReference>
<dbReference type="STRING" id="7955.ENSDARP00000110969"/>
<dbReference type="PaxDb" id="7955-ENSDARP00000030405"/>
<dbReference type="GeneID" id="402916"/>
<dbReference type="KEGG" id="dre:402916"/>
<dbReference type="AGR" id="ZFIN:ZDB-GENE-021210-3"/>
<dbReference type="CTD" id="345778"/>
<dbReference type="ZFIN" id="ZDB-GENE-021210-3">
    <property type="gene designation" value="mtx3"/>
</dbReference>
<dbReference type="eggNOG" id="KOG3028">
    <property type="taxonomic scope" value="Eukaryota"/>
</dbReference>
<dbReference type="InParanoid" id="Q4VBW0"/>
<dbReference type="OrthoDB" id="5835136at2759"/>
<dbReference type="PhylomeDB" id="Q4VBW0"/>
<dbReference type="TreeFam" id="TF313422"/>
<dbReference type="PRO" id="PR:Q4VBW0"/>
<dbReference type="Proteomes" id="UP000000437">
    <property type="component" value="Chromosome 5"/>
</dbReference>
<dbReference type="GO" id="GO:0005737">
    <property type="term" value="C:cytoplasm"/>
    <property type="evidence" value="ECO:0000318"/>
    <property type="project" value="GO_Central"/>
</dbReference>
<dbReference type="GO" id="GO:0001401">
    <property type="term" value="C:SAM complex"/>
    <property type="evidence" value="ECO:0000318"/>
    <property type="project" value="GO_Central"/>
</dbReference>
<dbReference type="GO" id="GO:0007005">
    <property type="term" value="P:mitochondrion organization"/>
    <property type="evidence" value="ECO:0000318"/>
    <property type="project" value="GO_Central"/>
</dbReference>
<dbReference type="GO" id="GO:0015031">
    <property type="term" value="P:protein transport"/>
    <property type="evidence" value="ECO:0007669"/>
    <property type="project" value="UniProtKB-KW"/>
</dbReference>
<dbReference type="CDD" id="cd03212">
    <property type="entry name" value="GST_C_Metaxin1_3"/>
    <property type="match status" value="1"/>
</dbReference>
<dbReference type="CDD" id="cd03078">
    <property type="entry name" value="GST_N_Metaxin1_like"/>
    <property type="match status" value="1"/>
</dbReference>
<dbReference type="InterPro" id="IPR036282">
    <property type="entry name" value="Glutathione-S-Trfase_C_sf"/>
</dbReference>
<dbReference type="InterPro" id="IPR040079">
    <property type="entry name" value="Glutathione_S-Trfase"/>
</dbReference>
<dbReference type="InterPro" id="IPR017410">
    <property type="entry name" value="Metaxin1/3"/>
</dbReference>
<dbReference type="InterPro" id="IPR033468">
    <property type="entry name" value="Metaxin_GST"/>
</dbReference>
<dbReference type="InterPro" id="IPR050931">
    <property type="entry name" value="Mito_Protein_Transport_Metaxin"/>
</dbReference>
<dbReference type="InterPro" id="IPR019564">
    <property type="entry name" value="Sam37/metaxin_N"/>
</dbReference>
<dbReference type="PANTHER" id="PTHR12289">
    <property type="entry name" value="METAXIN RELATED"/>
    <property type="match status" value="1"/>
</dbReference>
<dbReference type="PANTHER" id="PTHR12289:SF30">
    <property type="entry name" value="METAXIN-3"/>
    <property type="match status" value="1"/>
</dbReference>
<dbReference type="Pfam" id="PF17171">
    <property type="entry name" value="GST_C_6"/>
    <property type="match status" value="1"/>
</dbReference>
<dbReference type="Pfam" id="PF10568">
    <property type="entry name" value="Tom37"/>
    <property type="match status" value="1"/>
</dbReference>
<dbReference type="PIRSF" id="PIRSF038150">
    <property type="entry name" value="Metaxin"/>
    <property type="match status" value="1"/>
</dbReference>
<dbReference type="SFLD" id="SFLDS00019">
    <property type="entry name" value="Glutathione_Transferase_(cytos"/>
    <property type="match status" value="1"/>
</dbReference>
<dbReference type="SFLD" id="SFLDG01180">
    <property type="entry name" value="SUF1"/>
    <property type="match status" value="1"/>
</dbReference>
<dbReference type="SUPFAM" id="SSF47616">
    <property type="entry name" value="GST C-terminal domain-like"/>
    <property type="match status" value="1"/>
</dbReference>
<feature type="chain" id="PRO_0000337101" description="Metaxin-3">
    <location>
        <begin position="1"/>
        <end position="313"/>
    </location>
</feature>
<feature type="region of interest" description="Disordered" evidence="3">
    <location>
        <begin position="280"/>
        <end position="313"/>
    </location>
</feature>
<feature type="sequence conflict" description="In Ref. 1; AAO23008." evidence="4" ref="1">
    <original>P</original>
    <variation>L</variation>
    <location>
        <position position="131"/>
    </location>
</feature>
<feature type="sequence conflict" description="In Ref. 1; AAO23008." evidence="4" ref="1">
    <original>F</original>
    <variation>L</variation>
    <location>
        <position position="241"/>
    </location>
</feature>
<feature type="sequence conflict" description="In Ref. 2; AAH94962." evidence="4" ref="2">
    <original>P</original>
    <variation>F</variation>
    <location>
        <position position="260"/>
    </location>
</feature>
<organism>
    <name type="scientific">Danio rerio</name>
    <name type="common">Zebrafish</name>
    <name type="synonym">Brachydanio rerio</name>
    <dbReference type="NCBI Taxonomy" id="7955"/>
    <lineage>
        <taxon>Eukaryota</taxon>
        <taxon>Metazoa</taxon>
        <taxon>Chordata</taxon>
        <taxon>Craniata</taxon>
        <taxon>Vertebrata</taxon>
        <taxon>Euteleostomi</taxon>
        <taxon>Actinopterygii</taxon>
        <taxon>Neopterygii</taxon>
        <taxon>Teleostei</taxon>
        <taxon>Ostariophysi</taxon>
        <taxon>Cypriniformes</taxon>
        <taxon>Danionidae</taxon>
        <taxon>Danioninae</taxon>
        <taxon>Danio</taxon>
    </lineage>
</organism>
<gene>
    <name type="primary">mtx3</name>
    <name type="ORF">zgc:109718</name>
</gene>
<reference key="1">
    <citation type="journal article" date="2004" name="Gene">
        <title>The zebrafish metaxin 3 gene (mtx3): cDNA and protein structure, and comparison to zebrafish metaxins 1 and 2.</title>
        <authorList>
            <person name="Adolph K.W."/>
        </authorList>
    </citation>
    <scope>NUCLEOTIDE SEQUENCE [MRNA]</scope>
    <source>
        <strain>AB</strain>
    </source>
</reference>
<reference key="2">
    <citation type="submission" date="2005-05" db="EMBL/GenBank/DDBJ databases">
        <authorList>
            <consortium name="NIH - Zebrafish Gene Collection (ZGC) project"/>
        </authorList>
    </citation>
    <scope>NUCLEOTIDE SEQUENCE [LARGE SCALE MRNA]</scope>
    <source>
        <tissue>Embryo</tissue>
    </source>
</reference>
<accession>Q4VBW0</accession>
<accession>Q6Y0L8</accession>
<proteinExistence type="evidence at transcript level"/>
<name>MTX3_DANRE</name>
<comment type="function">
    <text evidence="1">Could function in transport of proteins into the mitochondrion.</text>
</comment>
<comment type="subunit">
    <text evidence="2">Part of a large protein complex spanning both mitochondrial membranes termed the mitochondrial intermembrane space bridging (MIB) complex.</text>
</comment>
<comment type="subcellular location">
    <subcellularLocation>
        <location evidence="2">Mitochondrion</location>
    </subcellularLocation>
    <subcellularLocation>
        <location evidence="4">Mitochondrion outer membrane</location>
    </subcellularLocation>
</comment>
<comment type="similarity">
    <text evidence="4">Belongs to the metaxin family.</text>
</comment>
<sequence length="313" mass="35227">MAEPIELLCWGGDWDLPSVQTDSLTVLAYAKFAGAELTVKFVDWTWRTITASVPQIHYEGTTVTEPTQILNFLRKQRFNADFELTAKQGADTMAYIALLEEKLRPALLHTFWVDAENYANLTRPWFTSHSPFPLNFFVPGRQASLALSRILLTKAESPLLNITEVEGKIYSEAKECLNLLSHRLGNFNFFFGDTPTSLDAFVFGHIAPLIKAPLPSGQLQKHLNQLDNLCQFCNTILKNYFTDATAEKRMDCSPTVAHDPVDANLQKLTQLVNKESNLIEKMDDNLRSSPQHRPHRHEAKPSAPASDRNSTPA</sequence>